<organism>
    <name type="scientific">Salmonella agona (strain SL483)</name>
    <dbReference type="NCBI Taxonomy" id="454166"/>
    <lineage>
        <taxon>Bacteria</taxon>
        <taxon>Pseudomonadati</taxon>
        <taxon>Pseudomonadota</taxon>
        <taxon>Gammaproteobacteria</taxon>
        <taxon>Enterobacterales</taxon>
        <taxon>Enterobacteriaceae</taxon>
        <taxon>Salmonella</taxon>
    </lineage>
</organism>
<comment type="function">
    <text evidence="1">Removes maltotriose and maltotetraose chains that are attached by 1,6-alpha-linkage to the limit dextrin main chain, generating a debranched limit dextrin.</text>
</comment>
<comment type="catalytic activity">
    <reaction evidence="1">
        <text>Hydrolysis of (1-&gt;6)-alpha-D-glucosidic linkages to branches with degrees of polymerization of three or four glucose residues in limit dextrin.</text>
        <dbReference type="EC" id="3.2.1.196"/>
    </reaction>
</comment>
<comment type="pathway">
    <text evidence="1">Glycan degradation; glycogen degradation.</text>
</comment>
<comment type="similarity">
    <text evidence="1">Belongs to the glycosyl hydrolase 13 family.</text>
</comment>
<accession>B5F8Q3</accession>
<reference key="1">
    <citation type="journal article" date="2011" name="J. Bacteriol.">
        <title>Comparative genomics of 28 Salmonella enterica isolates: evidence for CRISPR-mediated adaptive sublineage evolution.</title>
        <authorList>
            <person name="Fricke W.F."/>
            <person name="Mammel M.K."/>
            <person name="McDermott P.F."/>
            <person name="Tartera C."/>
            <person name="White D.G."/>
            <person name="Leclerc J.E."/>
            <person name="Ravel J."/>
            <person name="Cebula T.A."/>
        </authorList>
    </citation>
    <scope>NUCLEOTIDE SEQUENCE [LARGE SCALE GENOMIC DNA]</scope>
    <source>
        <strain>SL483</strain>
    </source>
</reference>
<protein>
    <recommendedName>
        <fullName evidence="1">Glycogen debranching enzyme</fullName>
        <ecNumber evidence="1">3.2.1.196</ecNumber>
    </recommendedName>
    <alternativeName>
        <fullName evidence="1">Limit dextrin alpha-1,6-maltotetraose-hydrolase</fullName>
    </alternativeName>
</protein>
<proteinExistence type="inferred from homology"/>
<sequence>MTQLAIGEATPHGATYDGHGVNFTLFSAHAERVELCVFDSRGNERRYDLPGRRGDVWHGYLAGARPGLRYGYRVHGPWQPAQGHRFNPAKLLLDPYARRVEGELKDHPLLHGGHDEPDYRDNAAVAPKSVIISDHYDWEDDAAPRTPWGKTVIYEAHVKGLTYLHPELPQEIRGTYKALGHPVMVAYFKQLGITALELLPVAQFASEPRLQRMGLTNYWGYNPMAMFALHPAWASSPETALDEFRDAVKALHRAGIEVILDIVLNHSAELDLDGPTFSLRGIDNRSYYWIRDDGDYHNWTGCGNTLNLSHPGVVEYACECLRYWVETCHVDGFRFDLASVMGRTPTFRQDAPLFAAIKACPVLSTVKLIAEPWDIGEGGYQVGNFPPPFAEWNDHFRDAARRFWLPRNLTTGEFACRFAASSDVFKRNGRTPGASVNLLTAHDGFTLRDCVCFNQKHNEANGEENRDGTNSNYSDNHGKEGLGGPLDLMERRRDSIHALLATLLLSQGTPMLLAGDEHGHSQHGNNNAYCQDNALTWLDWQQANRGLTTFTAALIRLRQQIPALTGNSWWEEGDGNVRWLNKNAQPLSADEWQNGPKLMQILLSDRFLIAINATLEVTDIVLPEGEWRAVPPFAGEDNPVITAVWQGPAHGLCVFQRG</sequence>
<name>GLGX_SALA4</name>
<gene>
    <name evidence="1" type="primary">glgX</name>
    <name type="ordered locus">SeAg_B3738</name>
</gene>
<keyword id="KW-0119">Carbohydrate metabolism</keyword>
<keyword id="KW-0321">Glycogen metabolism</keyword>
<keyword id="KW-0326">Glycosidase</keyword>
<keyword id="KW-0378">Hydrolase</keyword>
<dbReference type="EC" id="3.2.1.196" evidence="1"/>
<dbReference type="EMBL" id="CP001138">
    <property type="protein sequence ID" value="ACH52123.1"/>
    <property type="molecule type" value="Genomic_DNA"/>
</dbReference>
<dbReference type="RefSeq" id="WP_000192478.1">
    <property type="nucleotide sequence ID" value="NC_011149.1"/>
</dbReference>
<dbReference type="SMR" id="B5F8Q3"/>
<dbReference type="CAZy" id="CBM48">
    <property type="family name" value="Carbohydrate-Binding Module Family 48"/>
</dbReference>
<dbReference type="CAZy" id="GH13">
    <property type="family name" value="Glycoside Hydrolase Family 13"/>
</dbReference>
<dbReference type="KEGG" id="sea:SeAg_B3738"/>
<dbReference type="HOGENOM" id="CLU_011725_1_1_6"/>
<dbReference type="UniPathway" id="UPA00165"/>
<dbReference type="Proteomes" id="UP000008819">
    <property type="component" value="Chromosome"/>
</dbReference>
<dbReference type="GO" id="GO:0004133">
    <property type="term" value="F:glycogen debranching enzyme activity"/>
    <property type="evidence" value="ECO:0007669"/>
    <property type="project" value="UniProtKB-UniRule"/>
</dbReference>
<dbReference type="GO" id="GO:0004553">
    <property type="term" value="F:hydrolase activity, hydrolyzing O-glycosyl compounds"/>
    <property type="evidence" value="ECO:0007669"/>
    <property type="project" value="InterPro"/>
</dbReference>
<dbReference type="GO" id="GO:0005980">
    <property type="term" value="P:glycogen catabolic process"/>
    <property type="evidence" value="ECO:0007669"/>
    <property type="project" value="UniProtKB-UniRule"/>
</dbReference>
<dbReference type="CDD" id="cd11326">
    <property type="entry name" value="AmyAc_Glg_debranch"/>
    <property type="match status" value="1"/>
</dbReference>
<dbReference type="CDD" id="cd02856">
    <property type="entry name" value="E_set_GDE_Isoamylase_N"/>
    <property type="match status" value="1"/>
</dbReference>
<dbReference type="FunFam" id="2.60.40.10:FF:000468">
    <property type="entry name" value="Glycogen debranching enzyme"/>
    <property type="match status" value="1"/>
</dbReference>
<dbReference type="Gene3D" id="3.20.20.80">
    <property type="entry name" value="Glycosidases"/>
    <property type="match status" value="1"/>
</dbReference>
<dbReference type="Gene3D" id="2.60.40.1180">
    <property type="entry name" value="Golgi alpha-mannosidase II"/>
    <property type="match status" value="1"/>
</dbReference>
<dbReference type="Gene3D" id="2.60.40.10">
    <property type="entry name" value="Immunoglobulins"/>
    <property type="match status" value="1"/>
</dbReference>
<dbReference type="HAMAP" id="MF_01248">
    <property type="entry name" value="GlgX"/>
    <property type="match status" value="1"/>
</dbReference>
<dbReference type="InterPro" id="IPR040784">
    <property type="entry name" value="GlgX_C"/>
</dbReference>
<dbReference type="InterPro" id="IPR044505">
    <property type="entry name" value="GlgX_Isoamylase_N_E_set"/>
</dbReference>
<dbReference type="InterPro" id="IPR006047">
    <property type="entry name" value="Glyco_hydro_13_cat_dom"/>
</dbReference>
<dbReference type="InterPro" id="IPR004193">
    <property type="entry name" value="Glyco_hydro_13_N"/>
</dbReference>
<dbReference type="InterPro" id="IPR013780">
    <property type="entry name" value="Glyco_hydro_b"/>
</dbReference>
<dbReference type="InterPro" id="IPR022844">
    <property type="entry name" value="Glycogen_debranch_bac"/>
</dbReference>
<dbReference type="InterPro" id="IPR011837">
    <property type="entry name" value="Glycogen_debranch_GlgX"/>
</dbReference>
<dbReference type="InterPro" id="IPR017853">
    <property type="entry name" value="Glycoside_hydrolase_SF"/>
</dbReference>
<dbReference type="InterPro" id="IPR013783">
    <property type="entry name" value="Ig-like_fold"/>
</dbReference>
<dbReference type="InterPro" id="IPR014756">
    <property type="entry name" value="Ig_E-set"/>
</dbReference>
<dbReference type="NCBIfam" id="TIGR02100">
    <property type="entry name" value="glgX_debranch"/>
    <property type="match status" value="1"/>
</dbReference>
<dbReference type="NCBIfam" id="NF002983">
    <property type="entry name" value="PRK03705.1"/>
    <property type="match status" value="1"/>
</dbReference>
<dbReference type="PANTHER" id="PTHR43002">
    <property type="entry name" value="GLYCOGEN DEBRANCHING ENZYME"/>
    <property type="match status" value="1"/>
</dbReference>
<dbReference type="Pfam" id="PF00128">
    <property type="entry name" value="Alpha-amylase"/>
    <property type="match status" value="1"/>
</dbReference>
<dbReference type="Pfam" id="PF02922">
    <property type="entry name" value="CBM_48"/>
    <property type="match status" value="1"/>
</dbReference>
<dbReference type="Pfam" id="PF18390">
    <property type="entry name" value="GlgX_C"/>
    <property type="match status" value="1"/>
</dbReference>
<dbReference type="SMART" id="SM00642">
    <property type="entry name" value="Aamy"/>
    <property type="match status" value="1"/>
</dbReference>
<dbReference type="SUPFAM" id="SSF51445">
    <property type="entry name" value="(Trans)glycosidases"/>
    <property type="match status" value="1"/>
</dbReference>
<dbReference type="SUPFAM" id="SSF81296">
    <property type="entry name" value="E set domains"/>
    <property type="match status" value="1"/>
</dbReference>
<evidence type="ECO:0000255" key="1">
    <source>
        <dbReference type="HAMAP-Rule" id="MF_01248"/>
    </source>
</evidence>
<evidence type="ECO:0000256" key="2">
    <source>
        <dbReference type="SAM" id="MobiDB-lite"/>
    </source>
</evidence>
<feature type="chain" id="PRO_1000139872" description="Glycogen debranching enzyme">
    <location>
        <begin position="1"/>
        <end position="658"/>
    </location>
</feature>
<feature type="region of interest" description="Disordered" evidence="2">
    <location>
        <begin position="459"/>
        <end position="483"/>
    </location>
</feature>
<feature type="active site" description="Nucleophile" evidence="1">
    <location>
        <position position="336"/>
    </location>
</feature>
<feature type="active site" description="Proton donor" evidence="1">
    <location>
        <position position="371"/>
    </location>
</feature>
<feature type="site" description="Transition state stabilizer" evidence="1">
    <location>
        <position position="443"/>
    </location>
</feature>